<gene>
    <name evidence="1" type="primary">rpsK</name>
    <name type="ordered locus">MCCL_0220</name>
</gene>
<dbReference type="EMBL" id="AP009484">
    <property type="protein sequence ID" value="BAH16927.1"/>
    <property type="molecule type" value="Genomic_DNA"/>
</dbReference>
<dbReference type="RefSeq" id="WP_012656128.1">
    <property type="nucleotide sequence ID" value="NC_011999.1"/>
</dbReference>
<dbReference type="SMR" id="B9E9L6"/>
<dbReference type="STRING" id="458233.MCCL_0220"/>
<dbReference type="GeneID" id="35294496"/>
<dbReference type="GeneID" id="61130643"/>
<dbReference type="KEGG" id="mcl:MCCL_0220"/>
<dbReference type="eggNOG" id="COG0100">
    <property type="taxonomic scope" value="Bacteria"/>
</dbReference>
<dbReference type="HOGENOM" id="CLU_072439_5_0_9"/>
<dbReference type="OrthoDB" id="9806415at2"/>
<dbReference type="Proteomes" id="UP000001383">
    <property type="component" value="Chromosome"/>
</dbReference>
<dbReference type="GO" id="GO:1990904">
    <property type="term" value="C:ribonucleoprotein complex"/>
    <property type="evidence" value="ECO:0007669"/>
    <property type="project" value="UniProtKB-KW"/>
</dbReference>
<dbReference type="GO" id="GO:0005840">
    <property type="term" value="C:ribosome"/>
    <property type="evidence" value="ECO:0007669"/>
    <property type="project" value="UniProtKB-KW"/>
</dbReference>
<dbReference type="GO" id="GO:0019843">
    <property type="term" value="F:rRNA binding"/>
    <property type="evidence" value="ECO:0007669"/>
    <property type="project" value="UniProtKB-UniRule"/>
</dbReference>
<dbReference type="GO" id="GO:0003735">
    <property type="term" value="F:structural constituent of ribosome"/>
    <property type="evidence" value="ECO:0007669"/>
    <property type="project" value="InterPro"/>
</dbReference>
<dbReference type="GO" id="GO:0006412">
    <property type="term" value="P:translation"/>
    <property type="evidence" value="ECO:0007669"/>
    <property type="project" value="UniProtKB-UniRule"/>
</dbReference>
<dbReference type="FunFam" id="3.30.420.80:FF:000001">
    <property type="entry name" value="30S ribosomal protein S11"/>
    <property type="match status" value="1"/>
</dbReference>
<dbReference type="Gene3D" id="3.30.420.80">
    <property type="entry name" value="Ribosomal protein S11"/>
    <property type="match status" value="1"/>
</dbReference>
<dbReference type="HAMAP" id="MF_01310">
    <property type="entry name" value="Ribosomal_uS11"/>
    <property type="match status" value="1"/>
</dbReference>
<dbReference type="InterPro" id="IPR001971">
    <property type="entry name" value="Ribosomal_uS11"/>
</dbReference>
<dbReference type="InterPro" id="IPR019981">
    <property type="entry name" value="Ribosomal_uS11_bac-type"/>
</dbReference>
<dbReference type="InterPro" id="IPR018102">
    <property type="entry name" value="Ribosomal_uS11_CS"/>
</dbReference>
<dbReference type="InterPro" id="IPR036967">
    <property type="entry name" value="Ribosomal_uS11_sf"/>
</dbReference>
<dbReference type="NCBIfam" id="NF003698">
    <property type="entry name" value="PRK05309.1"/>
    <property type="match status" value="1"/>
</dbReference>
<dbReference type="NCBIfam" id="TIGR03632">
    <property type="entry name" value="uS11_bact"/>
    <property type="match status" value="1"/>
</dbReference>
<dbReference type="PANTHER" id="PTHR11759">
    <property type="entry name" value="40S RIBOSOMAL PROTEIN S14/30S RIBOSOMAL PROTEIN S11"/>
    <property type="match status" value="1"/>
</dbReference>
<dbReference type="Pfam" id="PF00411">
    <property type="entry name" value="Ribosomal_S11"/>
    <property type="match status" value="1"/>
</dbReference>
<dbReference type="PIRSF" id="PIRSF002131">
    <property type="entry name" value="Ribosomal_S11"/>
    <property type="match status" value="1"/>
</dbReference>
<dbReference type="SUPFAM" id="SSF53137">
    <property type="entry name" value="Translational machinery components"/>
    <property type="match status" value="1"/>
</dbReference>
<dbReference type="PROSITE" id="PS00054">
    <property type="entry name" value="RIBOSOMAL_S11"/>
    <property type="match status" value="1"/>
</dbReference>
<protein>
    <recommendedName>
        <fullName evidence="1">Small ribosomal subunit protein uS11</fullName>
    </recommendedName>
    <alternativeName>
        <fullName evidence="2">30S ribosomal protein S11</fullName>
    </alternativeName>
</protein>
<feature type="chain" id="PRO_1000165554" description="Small ribosomal subunit protein uS11">
    <location>
        <begin position="1"/>
        <end position="129"/>
    </location>
</feature>
<proteinExistence type="inferred from homology"/>
<evidence type="ECO:0000255" key="1">
    <source>
        <dbReference type="HAMAP-Rule" id="MF_01310"/>
    </source>
</evidence>
<evidence type="ECO:0000305" key="2"/>
<keyword id="KW-1185">Reference proteome</keyword>
<keyword id="KW-0687">Ribonucleoprotein</keyword>
<keyword id="KW-0689">Ribosomal protein</keyword>
<keyword id="KW-0694">RNA-binding</keyword>
<keyword id="KW-0699">rRNA-binding</keyword>
<comment type="function">
    <text evidence="1">Located on the platform of the 30S subunit, it bridges several disparate RNA helices of the 16S rRNA. Forms part of the Shine-Dalgarno cleft in the 70S ribosome.</text>
</comment>
<comment type="subunit">
    <text evidence="1">Part of the 30S ribosomal subunit. Interacts with proteins S7 and S18. Binds to IF-3.</text>
</comment>
<comment type="similarity">
    <text evidence="1">Belongs to the universal ribosomal protein uS11 family.</text>
</comment>
<name>RS11_MACCJ</name>
<reference key="1">
    <citation type="journal article" date="2009" name="J. Bacteriol.">
        <title>Complete genome sequence of Macrococcus caseolyticus strain JCSCS5402, reflecting the ancestral genome of the human-pathogenic staphylococci.</title>
        <authorList>
            <person name="Baba T."/>
            <person name="Kuwahara-Arai K."/>
            <person name="Uchiyama I."/>
            <person name="Takeuchi F."/>
            <person name="Ito T."/>
            <person name="Hiramatsu K."/>
        </authorList>
    </citation>
    <scope>NUCLEOTIDE SEQUENCE [LARGE SCALE GENOMIC DNA]</scope>
    <source>
        <strain>JCSC5402</strain>
    </source>
</reference>
<sequence length="129" mass="13923">MARKQVSRKRRVKKNIENGVAHIRSTFNNTIVTITDEFGNALSWSSAGALGFRGSRKSTPFAAQMASETASKAAMEHGLKTVEVTVKGPGQGREAAIRALQSAGLEITAIKDVTPVPHNGCRPPKRRRV</sequence>
<organism>
    <name type="scientific">Macrococcus caseolyticus (strain JCSC5402)</name>
    <name type="common">Macrococcoides caseolyticum</name>
    <dbReference type="NCBI Taxonomy" id="458233"/>
    <lineage>
        <taxon>Bacteria</taxon>
        <taxon>Bacillati</taxon>
        <taxon>Bacillota</taxon>
        <taxon>Bacilli</taxon>
        <taxon>Bacillales</taxon>
        <taxon>Staphylococcaceae</taxon>
        <taxon>Macrococcoides</taxon>
    </lineage>
</organism>
<accession>B9E9L6</accession>